<protein>
    <recommendedName>
        <fullName evidence="1">tRNA/tmRNA (uracil-C(5))-methyltransferase</fullName>
        <ecNumber evidence="1">2.1.1.-</ecNumber>
        <ecNumber evidence="1">2.1.1.35</ecNumber>
    </recommendedName>
    <alternativeName>
        <fullName evidence="1">tRNA (uracil(54)-C(5))-methyltransferase</fullName>
    </alternativeName>
    <alternativeName>
        <fullName evidence="1">tRNA(m5U54)-methyltransferase</fullName>
        <shortName evidence="1">RUMT</shortName>
    </alternativeName>
    <alternativeName>
        <fullName evidence="1">tmRNA (uracil(341)-C(5))-methyltransferase</fullName>
    </alternativeName>
</protein>
<keyword id="KW-0489">Methyltransferase</keyword>
<keyword id="KW-0949">S-adenosyl-L-methionine</keyword>
<keyword id="KW-0808">Transferase</keyword>
<keyword id="KW-0819">tRNA processing</keyword>
<reference key="1">
    <citation type="submission" date="2007-05" db="EMBL/GenBank/DDBJ databases">
        <title>Complete sequence of Pseudomonas putida F1.</title>
        <authorList>
            <consortium name="US DOE Joint Genome Institute"/>
            <person name="Copeland A."/>
            <person name="Lucas S."/>
            <person name="Lapidus A."/>
            <person name="Barry K."/>
            <person name="Detter J.C."/>
            <person name="Glavina del Rio T."/>
            <person name="Hammon N."/>
            <person name="Israni S."/>
            <person name="Dalin E."/>
            <person name="Tice H."/>
            <person name="Pitluck S."/>
            <person name="Chain P."/>
            <person name="Malfatti S."/>
            <person name="Shin M."/>
            <person name="Vergez L."/>
            <person name="Schmutz J."/>
            <person name="Larimer F."/>
            <person name="Land M."/>
            <person name="Hauser L."/>
            <person name="Kyrpides N."/>
            <person name="Lykidis A."/>
            <person name="Parales R."/>
            <person name="Richardson P."/>
        </authorList>
    </citation>
    <scope>NUCLEOTIDE SEQUENCE [LARGE SCALE GENOMIC DNA]</scope>
    <source>
        <strain>ATCC 700007 / DSM 6899 / JCM 31910 / BCRC 17059 / LMG 24140 / F1</strain>
    </source>
</reference>
<accession>A5W926</accession>
<organism>
    <name type="scientific">Pseudomonas putida (strain ATCC 700007 / DSM 6899 / JCM 31910 / BCRC 17059 / LMG 24140 / F1)</name>
    <dbReference type="NCBI Taxonomy" id="351746"/>
    <lineage>
        <taxon>Bacteria</taxon>
        <taxon>Pseudomonadati</taxon>
        <taxon>Pseudomonadota</taxon>
        <taxon>Gammaproteobacteria</taxon>
        <taxon>Pseudomonadales</taxon>
        <taxon>Pseudomonadaceae</taxon>
        <taxon>Pseudomonas</taxon>
    </lineage>
</organism>
<evidence type="ECO:0000255" key="1">
    <source>
        <dbReference type="HAMAP-Rule" id="MF_01011"/>
    </source>
</evidence>
<dbReference type="EC" id="2.1.1.-" evidence="1"/>
<dbReference type="EC" id="2.1.1.35" evidence="1"/>
<dbReference type="EMBL" id="CP000712">
    <property type="protein sequence ID" value="ABQ80636.1"/>
    <property type="molecule type" value="Genomic_DNA"/>
</dbReference>
<dbReference type="SMR" id="A5W926"/>
<dbReference type="KEGG" id="ppf:Pput_4516"/>
<dbReference type="eggNOG" id="COG2265">
    <property type="taxonomic scope" value="Bacteria"/>
</dbReference>
<dbReference type="HOGENOM" id="CLU_043022_0_0_6"/>
<dbReference type="GO" id="GO:0005829">
    <property type="term" value="C:cytosol"/>
    <property type="evidence" value="ECO:0007669"/>
    <property type="project" value="TreeGrafter"/>
</dbReference>
<dbReference type="GO" id="GO:0019843">
    <property type="term" value="F:rRNA binding"/>
    <property type="evidence" value="ECO:0007669"/>
    <property type="project" value="TreeGrafter"/>
</dbReference>
<dbReference type="GO" id="GO:0030697">
    <property type="term" value="F:tRNA (uracil(54)-C5)-methyltransferase activity, S-adenosyl methionine-dependent"/>
    <property type="evidence" value="ECO:0007669"/>
    <property type="project" value="UniProtKB-UniRule"/>
</dbReference>
<dbReference type="GO" id="GO:0000049">
    <property type="term" value="F:tRNA binding"/>
    <property type="evidence" value="ECO:0007669"/>
    <property type="project" value="TreeGrafter"/>
</dbReference>
<dbReference type="GO" id="GO:0030488">
    <property type="term" value="P:tRNA methylation"/>
    <property type="evidence" value="ECO:0007669"/>
    <property type="project" value="UniProtKB-UniRule"/>
</dbReference>
<dbReference type="CDD" id="cd02440">
    <property type="entry name" value="AdoMet_MTases"/>
    <property type="match status" value="1"/>
</dbReference>
<dbReference type="FunFam" id="2.40.50.1070:FF:000001">
    <property type="entry name" value="tRNA/tmRNA (uracil-C(5))-methyltransferase"/>
    <property type="match status" value="1"/>
</dbReference>
<dbReference type="FunFam" id="3.40.50.150:FF:000012">
    <property type="entry name" value="tRNA/tmRNA (uracil-C(5))-methyltransferase"/>
    <property type="match status" value="1"/>
</dbReference>
<dbReference type="Gene3D" id="2.40.50.1070">
    <property type="match status" value="1"/>
</dbReference>
<dbReference type="Gene3D" id="3.40.50.150">
    <property type="entry name" value="Vaccinia Virus protein VP39"/>
    <property type="match status" value="1"/>
</dbReference>
<dbReference type="HAMAP" id="MF_01011">
    <property type="entry name" value="RNA_methyltr_TrmA"/>
    <property type="match status" value="1"/>
</dbReference>
<dbReference type="InterPro" id="IPR030390">
    <property type="entry name" value="MeTrfase_TrmA_AS"/>
</dbReference>
<dbReference type="InterPro" id="IPR030391">
    <property type="entry name" value="MeTrfase_TrmA_CS"/>
</dbReference>
<dbReference type="InterPro" id="IPR029063">
    <property type="entry name" value="SAM-dependent_MTases_sf"/>
</dbReference>
<dbReference type="InterPro" id="IPR011869">
    <property type="entry name" value="TrmA_MeTrfase"/>
</dbReference>
<dbReference type="InterPro" id="IPR010280">
    <property type="entry name" value="U5_MeTrfase_fam"/>
</dbReference>
<dbReference type="NCBIfam" id="TIGR02143">
    <property type="entry name" value="trmA_only"/>
    <property type="match status" value="1"/>
</dbReference>
<dbReference type="PANTHER" id="PTHR47790">
    <property type="entry name" value="TRNA/TMRNA (URACIL-C(5))-METHYLTRANSFERASE"/>
    <property type="match status" value="1"/>
</dbReference>
<dbReference type="PANTHER" id="PTHR47790:SF2">
    <property type="entry name" value="TRNA_TMRNA (URACIL-C(5))-METHYLTRANSFERASE"/>
    <property type="match status" value="1"/>
</dbReference>
<dbReference type="Pfam" id="PF05958">
    <property type="entry name" value="tRNA_U5-meth_tr"/>
    <property type="match status" value="1"/>
</dbReference>
<dbReference type="SUPFAM" id="SSF53335">
    <property type="entry name" value="S-adenosyl-L-methionine-dependent methyltransferases"/>
    <property type="match status" value="1"/>
</dbReference>
<dbReference type="PROSITE" id="PS51687">
    <property type="entry name" value="SAM_MT_RNA_M5U"/>
    <property type="match status" value="1"/>
</dbReference>
<dbReference type="PROSITE" id="PS01230">
    <property type="entry name" value="TRMA_1"/>
    <property type="match status" value="1"/>
</dbReference>
<dbReference type="PROSITE" id="PS01231">
    <property type="entry name" value="TRMA_2"/>
    <property type="match status" value="1"/>
</dbReference>
<comment type="function">
    <text evidence="1">Dual-specificity methyltransferase that catalyzes the formation of 5-methyluridine at position 54 (m5U54) in all tRNAs, and that of position 341 (m5U341) in tmRNA (transfer-mRNA).</text>
</comment>
<comment type="catalytic activity">
    <reaction evidence="1">
        <text>uridine(54) in tRNA + S-adenosyl-L-methionine = 5-methyluridine(54) in tRNA + S-adenosyl-L-homocysteine + H(+)</text>
        <dbReference type="Rhea" id="RHEA:42712"/>
        <dbReference type="Rhea" id="RHEA-COMP:10167"/>
        <dbReference type="Rhea" id="RHEA-COMP:10193"/>
        <dbReference type="ChEBI" id="CHEBI:15378"/>
        <dbReference type="ChEBI" id="CHEBI:57856"/>
        <dbReference type="ChEBI" id="CHEBI:59789"/>
        <dbReference type="ChEBI" id="CHEBI:65315"/>
        <dbReference type="ChEBI" id="CHEBI:74447"/>
        <dbReference type="EC" id="2.1.1.35"/>
    </reaction>
</comment>
<comment type="catalytic activity">
    <reaction evidence="1">
        <text>uridine(341) in tmRNA + S-adenosyl-L-methionine = 5-methyluridine(341) in tmRNA + S-adenosyl-L-homocysteine + H(+)</text>
        <dbReference type="Rhea" id="RHEA:43612"/>
        <dbReference type="Rhea" id="RHEA-COMP:10630"/>
        <dbReference type="Rhea" id="RHEA-COMP:10631"/>
        <dbReference type="ChEBI" id="CHEBI:15378"/>
        <dbReference type="ChEBI" id="CHEBI:57856"/>
        <dbReference type="ChEBI" id="CHEBI:59789"/>
        <dbReference type="ChEBI" id="CHEBI:65315"/>
        <dbReference type="ChEBI" id="CHEBI:74447"/>
    </reaction>
</comment>
<comment type="similarity">
    <text evidence="1">Belongs to the class I-like SAM-binding methyltransferase superfamily. RNA M5U methyltransferase family. TrmA subfamily.</text>
</comment>
<name>TRMA_PSEP1</name>
<proteinExistence type="inferred from homology"/>
<feature type="chain" id="PRO_1000062994" description="tRNA/tmRNA (uracil-C(5))-methyltransferase">
    <location>
        <begin position="1"/>
        <end position="361"/>
    </location>
</feature>
<feature type="active site" description="Nucleophile" evidence="1">
    <location>
        <position position="319"/>
    </location>
</feature>
<feature type="active site" description="Proton acceptor" evidence="1">
    <location>
        <position position="353"/>
    </location>
</feature>
<feature type="binding site" evidence="1">
    <location>
        <position position="185"/>
    </location>
    <ligand>
        <name>S-adenosyl-L-methionine</name>
        <dbReference type="ChEBI" id="CHEBI:59789"/>
    </ligand>
</feature>
<feature type="binding site" evidence="1">
    <location>
        <position position="213"/>
    </location>
    <ligand>
        <name>S-adenosyl-L-methionine</name>
        <dbReference type="ChEBI" id="CHEBI:59789"/>
    </ligand>
</feature>
<feature type="binding site" evidence="1">
    <location>
        <position position="218"/>
    </location>
    <ligand>
        <name>S-adenosyl-L-methionine</name>
        <dbReference type="ChEBI" id="CHEBI:59789"/>
    </ligand>
</feature>
<feature type="binding site" evidence="1">
    <location>
        <position position="234"/>
    </location>
    <ligand>
        <name>S-adenosyl-L-methionine</name>
        <dbReference type="ChEBI" id="CHEBI:59789"/>
    </ligand>
</feature>
<feature type="binding site" evidence="1">
    <location>
        <position position="294"/>
    </location>
    <ligand>
        <name>S-adenosyl-L-methionine</name>
        <dbReference type="ChEBI" id="CHEBI:59789"/>
    </ligand>
</feature>
<sequence>MSAAFDPSSYATQLDAKVARLRELLAPFGAPEPAVFDSPREHYRLRAEFRLWREDGQRHYAMFAPGEKHKAILIDDFPIASERINALMPRLKAAWQASEELGNRLFQVEFLTTLAGDAMITMCYHRPLDEAWEVEARQLAEALGVSVIGRSKGKRLVIGRDYAVEKLDVAGRVFSYRQPEGAFTQPNGAVNQKMLSWAFEAMGDREDDLLELYCGNGNFTLPLATRVRQVLATEISKTSVNAALSNLDENAVDNVRLVRLSAEELTQALNEVRPFRRLEGIDLKSYQFGTVFVDPPRAGMDPDTCELTRRFERILYISCNPETLAANIAQLQDTHRIERCALFDQFPYTHHMESGVLLVRR</sequence>
<gene>
    <name evidence="1" type="primary">trmA</name>
    <name type="ordered locus">Pput_4516</name>
</gene>